<accession>Q6PF06</accession>
<accession>B7Z216</accession>
<accession>B7Z3D3</accession>
<accession>Q05DJ4</accession>
<accession>Q5QP83</accession>
<accession>Q8NAG2</accession>
<accession>Q96N36</accession>
<comment type="function">
    <text evidence="4">S-adenosyl-L-methionine-dependent guanine N(1)-methyltransferase that catalyzes the formation of N(1)-methylguanine at position 9 (m1G9) in tRNAs (PubMed:23042678). Probably not able to catalyze formation of N(1)-methyladenine at position 9 (m1A9) in tRNAs (PubMed:23042678).</text>
</comment>
<comment type="catalytic activity">
    <reaction evidence="4">
        <text>guanosine(9) in tRNA + S-adenosyl-L-methionine = N(1)-methylguanosine(9) in tRNA + S-adenosyl-L-homocysteine + H(+)</text>
        <dbReference type="Rhea" id="RHEA:43156"/>
        <dbReference type="Rhea" id="RHEA-COMP:10367"/>
        <dbReference type="Rhea" id="RHEA-COMP:10368"/>
        <dbReference type="ChEBI" id="CHEBI:15378"/>
        <dbReference type="ChEBI" id="CHEBI:57856"/>
        <dbReference type="ChEBI" id="CHEBI:59789"/>
        <dbReference type="ChEBI" id="CHEBI:73542"/>
        <dbReference type="ChEBI" id="CHEBI:74269"/>
        <dbReference type="EC" id="2.1.1.221"/>
    </reaction>
</comment>
<comment type="interaction">
    <interactant intactId="EBI-3923391">
        <id>Q6PF06</id>
    </interactant>
    <interactant intactId="EBI-9087860">
        <id>P32243-2</id>
        <label>OTX2</label>
    </interactant>
    <organismsDiffer>false</organismsDiffer>
    <experiments>3</experiments>
</comment>
<comment type="alternative products">
    <event type="alternative splicing"/>
    <isoform>
        <id>Q6PF06-1</id>
        <name>1</name>
        <sequence type="displayed"/>
    </isoform>
    <isoform>
        <id>Q6PF06-2</id>
        <name>2</name>
        <sequence type="described" ref="VSP_029519"/>
    </isoform>
    <isoform>
        <id>Q6PF06-5</id>
        <name>5</name>
        <sequence type="described" ref="VSP_055735 VSP_054653"/>
    </isoform>
    <isoform>
        <id>Q6PF06-3</id>
        <name>3</name>
        <sequence type="described" ref="VSP_029520 VSP_029521"/>
    </isoform>
    <isoform>
        <id>Q6PF06-4</id>
        <name>4</name>
        <sequence type="described" ref="VSP_054652 VSP_054653"/>
    </isoform>
</comment>
<comment type="similarity">
    <text evidence="2">Belongs to the class IV-like SAM-binding methyltransferase superfamily. TRM10 family.</text>
</comment>
<comment type="sequence caution" evidence="7">
    <conflict type="erroneous termination">
        <sequence resource="EMBL-CDS" id="BAB71074"/>
    </conflict>
    <text>Extended C-terminus.</text>
</comment>
<feature type="chain" id="PRO_0000311321" description="tRNA methyltransferase 10 homolog B">
    <location>
        <begin position="1"/>
        <end position="316"/>
    </location>
</feature>
<feature type="domain" description="SAM-dependent MTase TRM10-type" evidence="2">
    <location>
        <begin position="113"/>
        <end position="310"/>
    </location>
</feature>
<feature type="region of interest" description="Disordered" evidence="3">
    <location>
        <begin position="77"/>
        <end position="98"/>
    </location>
</feature>
<feature type="coiled-coil region" evidence="1">
    <location>
        <begin position="73"/>
        <end position="97"/>
    </location>
</feature>
<feature type="splice variant" id="VSP_029519" description="In isoform 2." evidence="5">
    <original>MDWKLEGSTQKVESPVLQGQEGILEETGEDGLPEGFQLLQIDAEGECQEGEILATGSTAWCSKNVQRKQRHWEKIVAAKKSKRKQEKERRKANRAENP</original>
    <variation>MVL</variation>
    <location>
        <begin position="1"/>
        <end position="98"/>
    </location>
</feature>
<feature type="splice variant" id="VSP_054652" description="In isoform 4." evidence="5">
    <location>
        <begin position="63"/>
        <end position="140"/>
    </location>
</feature>
<feature type="splice variant" id="VSP_055735" description="In isoform 5." evidence="5">
    <location>
        <begin position="141"/>
        <end position="191"/>
    </location>
</feature>
<feature type="splice variant" id="VSP_029520" description="In isoform 3." evidence="6">
    <original>ELSRLAGQIRRLYGSNKKADRPFWICLTGFTTDS</original>
    <variation>VEHPLSLEFLLAMREAQKGTAFRRIWSTPASGIP</variation>
    <location>
        <begin position="141"/>
        <end position="174"/>
    </location>
</feature>
<feature type="splice variant" id="VSP_029521" description="In isoform 3." evidence="6">
    <location>
        <begin position="175"/>
        <end position="316"/>
    </location>
</feature>
<feature type="splice variant" id="VSP_054653" description="In isoform 4 and isoform 5." evidence="5">
    <location>
        <begin position="282"/>
        <end position="290"/>
    </location>
</feature>
<feature type="sequence variant" id="VAR_037224" description="In dbSNP:rs36023446.">
    <original>V</original>
    <variation>G</variation>
    <location>
        <position position="234"/>
    </location>
</feature>
<feature type="sequence variant" id="VAR_037225" description="In dbSNP:rs12337034.">
    <original>V</original>
    <variation>A</variation>
    <location>
        <position position="242"/>
    </location>
</feature>
<feature type="sequence conflict" description="In Ref. 1; BAC03957." evidence="7" ref="1">
    <original>K</original>
    <variation>E</variation>
    <location>
        <position position="106"/>
    </location>
</feature>
<name>TM10B_HUMAN</name>
<keyword id="KW-0025">Alternative splicing</keyword>
<keyword id="KW-0175">Coiled coil</keyword>
<keyword id="KW-0489">Methyltransferase</keyword>
<keyword id="KW-1267">Proteomics identification</keyword>
<keyword id="KW-1185">Reference proteome</keyword>
<keyword id="KW-0949">S-adenosyl-L-methionine</keyword>
<keyword id="KW-0808">Transferase</keyword>
<protein>
    <recommendedName>
        <fullName>tRNA methyltransferase 10 homolog B</fullName>
        <ecNumber evidence="4">2.1.1.221</ecNumber>
    </recommendedName>
    <alternativeName>
        <fullName>RNA (guanine-9-)-methyltransferase domain-containing protein 3</fullName>
    </alternativeName>
    <alternativeName>
        <fullName>tRNA (guanine(9)-N(1))-methyltransferase TRMT10B</fullName>
    </alternativeName>
</protein>
<proteinExistence type="evidence at protein level"/>
<reference key="1">
    <citation type="journal article" date="2004" name="Nat. Genet.">
        <title>Complete sequencing and characterization of 21,243 full-length human cDNAs.</title>
        <authorList>
            <person name="Ota T."/>
            <person name="Suzuki Y."/>
            <person name="Nishikawa T."/>
            <person name="Otsuki T."/>
            <person name="Sugiyama T."/>
            <person name="Irie R."/>
            <person name="Wakamatsu A."/>
            <person name="Hayashi K."/>
            <person name="Sato H."/>
            <person name="Nagai K."/>
            <person name="Kimura K."/>
            <person name="Makita H."/>
            <person name="Sekine M."/>
            <person name="Obayashi M."/>
            <person name="Nishi T."/>
            <person name="Shibahara T."/>
            <person name="Tanaka T."/>
            <person name="Ishii S."/>
            <person name="Yamamoto J."/>
            <person name="Saito K."/>
            <person name="Kawai Y."/>
            <person name="Isono Y."/>
            <person name="Nakamura Y."/>
            <person name="Nagahari K."/>
            <person name="Murakami K."/>
            <person name="Yasuda T."/>
            <person name="Iwayanagi T."/>
            <person name="Wagatsuma M."/>
            <person name="Shiratori A."/>
            <person name="Sudo H."/>
            <person name="Hosoiri T."/>
            <person name="Kaku Y."/>
            <person name="Kodaira H."/>
            <person name="Kondo H."/>
            <person name="Sugawara M."/>
            <person name="Takahashi M."/>
            <person name="Kanda K."/>
            <person name="Yokoi T."/>
            <person name="Furuya T."/>
            <person name="Kikkawa E."/>
            <person name="Omura Y."/>
            <person name="Abe K."/>
            <person name="Kamihara K."/>
            <person name="Katsuta N."/>
            <person name="Sato K."/>
            <person name="Tanikawa M."/>
            <person name="Yamazaki M."/>
            <person name="Ninomiya K."/>
            <person name="Ishibashi T."/>
            <person name="Yamashita H."/>
            <person name="Murakawa K."/>
            <person name="Fujimori K."/>
            <person name="Tanai H."/>
            <person name="Kimata M."/>
            <person name="Watanabe M."/>
            <person name="Hiraoka S."/>
            <person name="Chiba Y."/>
            <person name="Ishida S."/>
            <person name="Ono Y."/>
            <person name="Takiguchi S."/>
            <person name="Watanabe S."/>
            <person name="Yosida M."/>
            <person name="Hotuta T."/>
            <person name="Kusano J."/>
            <person name="Kanehori K."/>
            <person name="Takahashi-Fujii A."/>
            <person name="Hara H."/>
            <person name="Tanase T.-O."/>
            <person name="Nomura Y."/>
            <person name="Togiya S."/>
            <person name="Komai F."/>
            <person name="Hara R."/>
            <person name="Takeuchi K."/>
            <person name="Arita M."/>
            <person name="Imose N."/>
            <person name="Musashino K."/>
            <person name="Yuuki H."/>
            <person name="Oshima A."/>
            <person name="Sasaki N."/>
            <person name="Aotsuka S."/>
            <person name="Yoshikawa Y."/>
            <person name="Matsunawa H."/>
            <person name="Ichihara T."/>
            <person name="Shiohata N."/>
            <person name="Sano S."/>
            <person name="Moriya S."/>
            <person name="Momiyama H."/>
            <person name="Satoh N."/>
            <person name="Takami S."/>
            <person name="Terashima Y."/>
            <person name="Suzuki O."/>
            <person name="Nakagawa S."/>
            <person name="Senoh A."/>
            <person name="Mizoguchi H."/>
            <person name="Goto Y."/>
            <person name="Shimizu F."/>
            <person name="Wakebe H."/>
            <person name="Hishigaki H."/>
            <person name="Watanabe T."/>
            <person name="Sugiyama A."/>
            <person name="Takemoto M."/>
            <person name="Kawakami B."/>
            <person name="Yamazaki M."/>
            <person name="Watanabe K."/>
            <person name="Kumagai A."/>
            <person name="Itakura S."/>
            <person name="Fukuzumi Y."/>
            <person name="Fujimori Y."/>
            <person name="Komiyama M."/>
            <person name="Tashiro H."/>
            <person name="Tanigami A."/>
            <person name="Fujiwara T."/>
            <person name="Ono T."/>
            <person name="Yamada K."/>
            <person name="Fujii Y."/>
            <person name="Ozaki K."/>
            <person name="Hirao M."/>
            <person name="Ohmori Y."/>
            <person name="Kawabata A."/>
            <person name="Hikiji T."/>
            <person name="Kobatake N."/>
            <person name="Inagaki H."/>
            <person name="Ikema Y."/>
            <person name="Okamoto S."/>
            <person name="Okitani R."/>
            <person name="Kawakami T."/>
            <person name="Noguchi S."/>
            <person name="Itoh T."/>
            <person name="Shigeta K."/>
            <person name="Senba T."/>
            <person name="Matsumura K."/>
            <person name="Nakajima Y."/>
            <person name="Mizuno T."/>
            <person name="Morinaga M."/>
            <person name="Sasaki M."/>
            <person name="Togashi T."/>
            <person name="Oyama M."/>
            <person name="Hata H."/>
            <person name="Watanabe M."/>
            <person name="Komatsu T."/>
            <person name="Mizushima-Sugano J."/>
            <person name="Satoh T."/>
            <person name="Shirai Y."/>
            <person name="Takahashi Y."/>
            <person name="Nakagawa K."/>
            <person name="Okumura K."/>
            <person name="Nagase T."/>
            <person name="Nomura N."/>
            <person name="Kikuchi H."/>
            <person name="Masuho Y."/>
            <person name="Yamashita R."/>
            <person name="Nakai K."/>
            <person name="Yada T."/>
            <person name="Nakamura Y."/>
            <person name="Ohara O."/>
            <person name="Isogai T."/>
            <person name="Sugano S."/>
        </authorList>
    </citation>
    <scope>NUCLEOTIDE SEQUENCE [LARGE SCALE MRNA] (ISOFORMS 1; 2; 4 AND 5)</scope>
    <source>
        <tissue>Amygdala</tissue>
        <tissue>Hippocampus</tissue>
        <tissue>Neuroblastoma</tissue>
        <tissue>Teratocarcinoma</tissue>
    </source>
</reference>
<reference key="2">
    <citation type="journal article" date="2004" name="Nature">
        <title>DNA sequence and analysis of human chromosome 9.</title>
        <authorList>
            <person name="Humphray S.J."/>
            <person name="Oliver K."/>
            <person name="Hunt A.R."/>
            <person name="Plumb R.W."/>
            <person name="Loveland J.E."/>
            <person name="Howe K.L."/>
            <person name="Andrews T.D."/>
            <person name="Searle S."/>
            <person name="Hunt S.E."/>
            <person name="Scott C.E."/>
            <person name="Jones M.C."/>
            <person name="Ainscough R."/>
            <person name="Almeida J.P."/>
            <person name="Ambrose K.D."/>
            <person name="Ashwell R.I.S."/>
            <person name="Babbage A.K."/>
            <person name="Babbage S."/>
            <person name="Bagguley C.L."/>
            <person name="Bailey J."/>
            <person name="Banerjee R."/>
            <person name="Barker D.J."/>
            <person name="Barlow K.F."/>
            <person name="Bates K."/>
            <person name="Beasley H."/>
            <person name="Beasley O."/>
            <person name="Bird C.P."/>
            <person name="Bray-Allen S."/>
            <person name="Brown A.J."/>
            <person name="Brown J.Y."/>
            <person name="Burford D."/>
            <person name="Burrill W."/>
            <person name="Burton J."/>
            <person name="Carder C."/>
            <person name="Carter N.P."/>
            <person name="Chapman J.C."/>
            <person name="Chen Y."/>
            <person name="Clarke G."/>
            <person name="Clark S.Y."/>
            <person name="Clee C.M."/>
            <person name="Clegg S."/>
            <person name="Collier R.E."/>
            <person name="Corby N."/>
            <person name="Crosier M."/>
            <person name="Cummings A.T."/>
            <person name="Davies J."/>
            <person name="Dhami P."/>
            <person name="Dunn M."/>
            <person name="Dutta I."/>
            <person name="Dyer L.W."/>
            <person name="Earthrowl M.E."/>
            <person name="Faulkner L."/>
            <person name="Fleming C.J."/>
            <person name="Frankish A."/>
            <person name="Frankland J.A."/>
            <person name="French L."/>
            <person name="Fricker D.G."/>
            <person name="Garner P."/>
            <person name="Garnett J."/>
            <person name="Ghori J."/>
            <person name="Gilbert J.G.R."/>
            <person name="Glison C."/>
            <person name="Grafham D.V."/>
            <person name="Gribble S."/>
            <person name="Griffiths C."/>
            <person name="Griffiths-Jones S."/>
            <person name="Grocock R."/>
            <person name="Guy J."/>
            <person name="Hall R.E."/>
            <person name="Hammond S."/>
            <person name="Harley J.L."/>
            <person name="Harrison E.S.I."/>
            <person name="Hart E.A."/>
            <person name="Heath P.D."/>
            <person name="Henderson C.D."/>
            <person name="Hopkins B.L."/>
            <person name="Howard P.J."/>
            <person name="Howden P.J."/>
            <person name="Huckle E."/>
            <person name="Johnson C."/>
            <person name="Johnson D."/>
            <person name="Joy A.A."/>
            <person name="Kay M."/>
            <person name="Keenan S."/>
            <person name="Kershaw J.K."/>
            <person name="Kimberley A.M."/>
            <person name="King A."/>
            <person name="Knights A."/>
            <person name="Laird G.K."/>
            <person name="Langford C."/>
            <person name="Lawlor S."/>
            <person name="Leongamornlert D.A."/>
            <person name="Leversha M."/>
            <person name="Lloyd C."/>
            <person name="Lloyd D.M."/>
            <person name="Lovell J."/>
            <person name="Martin S."/>
            <person name="Mashreghi-Mohammadi M."/>
            <person name="Matthews L."/>
            <person name="McLaren S."/>
            <person name="McLay K.E."/>
            <person name="McMurray A."/>
            <person name="Milne S."/>
            <person name="Nickerson T."/>
            <person name="Nisbett J."/>
            <person name="Nordsiek G."/>
            <person name="Pearce A.V."/>
            <person name="Peck A.I."/>
            <person name="Porter K.M."/>
            <person name="Pandian R."/>
            <person name="Pelan S."/>
            <person name="Phillimore B."/>
            <person name="Povey S."/>
            <person name="Ramsey Y."/>
            <person name="Rand V."/>
            <person name="Scharfe M."/>
            <person name="Sehra H.K."/>
            <person name="Shownkeen R."/>
            <person name="Sims S.K."/>
            <person name="Skuce C.D."/>
            <person name="Smith M."/>
            <person name="Steward C.A."/>
            <person name="Swarbreck D."/>
            <person name="Sycamore N."/>
            <person name="Tester J."/>
            <person name="Thorpe A."/>
            <person name="Tracey A."/>
            <person name="Tromans A."/>
            <person name="Thomas D.W."/>
            <person name="Wall M."/>
            <person name="Wallis J.M."/>
            <person name="West A.P."/>
            <person name="Whitehead S.L."/>
            <person name="Willey D.L."/>
            <person name="Williams S.A."/>
            <person name="Wilming L."/>
            <person name="Wray P.W."/>
            <person name="Young L."/>
            <person name="Ashurst J.L."/>
            <person name="Coulson A."/>
            <person name="Blocker H."/>
            <person name="Durbin R.M."/>
            <person name="Sulston J.E."/>
            <person name="Hubbard T."/>
            <person name="Jackson M.J."/>
            <person name="Bentley D.R."/>
            <person name="Beck S."/>
            <person name="Rogers J."/>
            <person name="Dunham I."/>
        </authorList>
    </citation>
    <scope>NUCLEOTIDE SEQUENCE [LARGE SCALE GENOMIC DNA]</scope>
</reference>
<reference key="3">
    <citation type="submission" date="2005-09" db="EMBL/GenBank/DDBJ databases">
        <authorList>
            <person name="Mural R.J."/>
            <person name="Istrail S."/>
            <person name="Sutton G.G."/>
            <person name="Florea L."/>
            <person name="Halpern A.L."/>
            <person name="Mobarry C.M."/>
            <person name="Lippert R."/>
            <person name="Walenz B."/>
            <person name="Shatkay H."/>
            <person name="Dew I."/>
            <person name="Miller J.R."/>
            <person name="Flanigan M.J."/>
            <person name="Edwards N.J."/>
            <person name="Bolanos R."/>
            <person name="Fasulo D."/>
            <person name="Halldorsson B.V."/>
            <person name="Hannenhalli S."/>
            <person name="Turner R."/>
            <person name="Yooseph S."/>
            <person name="Lu F."/>
            <person name="Nusskern D.R."/>
            <person name="Shue B.C."/>
            <person name="Zheng X.H."/>
            <person name="Zhong F."/>
            <person name="Delcher A.L."/>
            <person name="Huson D.H."/>
            <person name="Kravitz S.A."/>
            <person name="Mouchard L."/>
            <person name="Reinert K."/>
            <person name="Remington K.A."/>
            <person name="Clark A.G."/>
            <person name="Waterman M.S."/>
            <person name="Eichler E.E."/>
            <person name="Adams M.D."/>
            <person name="Hunkapiller M.W."/>
            <person name="Myers E.W."/>
            <person name="Venter J.C."/>
        </authorList>
    </citation>
    <scope>NUCLEOTIDE SEQUENCE [LARGE SCALE GENOMIC DNA]</scope>
</reference>
<reference key="4">
    <citation type="journal article" date="2004" name="Genome Res.">
        <title>The status, quality, and expansion of the NIH full-length cDNA project: the Mammalian Gene Collection (MGC).</title>
        <authorList>
            <consortium name="The MGC Project Team"/>
        </authorList>
    </citation>
    <scope>NUCLEOTIDE SEQUENCE [LARGE SCALE MRNA] (ISOFORMS 1 AND 3)</scope>
    <source>
        <tissue>Eye</tissue>
        <tissue>Placenta</tissue>
    </source>
</reference>
<reference key="5">
    <citation type="journal article" date="2012" name="Nucleic Acids Res.">
        <title>A subcomplex of human mitochondrial RNase P is a bifunctional methyltransferase--extensive moonlighting in mitochondrial tRNA biogenesis.</title>
        <authorList>
            <person name="Vilardo E."/>
            <person name="Nachbagauer C."/>
            <person name="Buzet A."/>
            <person name="Taschner A."/>
            <person name="Holzmann J."/>
            <person name="Rossmanith W."/>
        </authorList>
    </citation>
    <scope>FUNCTION</scope>
    <scope>CATALYTIC ACTIVITY</scope>
</reference>
<sequence>MDWKLEGSTQKVESPVLQGQEGILEETGEDGLPEGFQLLQIDAEGECQEGEILATGSTAWCSKNVQRKQRHWEKIVAAKKSKRKQEKERRKANRAENPGICPQHSKRFLRALTKDKLLEAKHSGPRLCIDLSMTHYMSKKELSRLAGQIRRLYGSNKKADRPFWICLTGFTTDSPLYEECVRMNDGFSSYLLDITEEDCFSLFPLETLVYLTPDSEHALEDVDLNKVYILGGLVDESIQKKVTFQKAREYSVKTARLPIQEYMVRNQNGKNYHSEILAINQVFDILSTYLETHNWPEALKKGVSSGKGYILRNSVE</sequence>
<organism>
    <name type="scientific">Homo sapiens</name>
    <name type="common">Human</name>
    <dbReference type="NCBI Taxonomy" id="9606"/>
    <lineage>
        <taxon>Eukaryota</taxon>
        <taxon>Metazoa</taxon>
        <taxon>Chordata</taxon>
        <taxon>Craniata</taxon>
        <taxon>Vertebrata</taxon>
        <taxon>Euteleostomi</taxon>
        <taxon>Mammalia</taxon>
        <taxon>Eutheria</taxon>
        <taxon>Euarchontoglires</taxon>
        <taxon>Primates</taxon>
        <taxon>Haplorrhini</taxon>
        <taxon>Catarrhini</taxon>
        <taxon>Hominidae</taxon>
        <taxon>Homo</taxon>
    </lineage>
</organism>
<dbReference type="EC" id="2.1.1.221" evidence="4"/>
<dbReference type="EMBL" id="AK056017">
    <property type="protein sequence ID" value="BAB71074.1"/>
    <property type="status" value="ALT_SEQ"/>
    <property type="molecule type" value="mRNA"/>
</dbReference>
<dbReference type="EMBL" id="AK092718">
    <property type="protein sequence ID" value="BAC03957.1"/>
    <property type="molecule type" value="mRNA"/>
</dbReference>
<dbReference type="EMBL" id="AK294219">
    <property type="protein sequence ID" value="BAH11702.1"/>
    <property type="molecule type" value="mRNA"/>
</dbReference>
<dbReference type="EMBL" id="AK295733">
    <property type="protein sequence ID" value="BAH12169.1"/>
    <property type="molecule type" value="mRNA"/>
</dbReference>
<dbReference type="EMBL" id="AL138752">
    <property type="status" value="NOT_ANNOTATED_CDS"/>
    <property type="molecule type" value="Genomic_DNA"/>
</dbReference>
<dbReference type="EMBL" id="AL591470">
    <property type="status" value="NOT_ANNOTATED_CDS"/>
    <property type="molecule type" value="Genomic_DNA"/>
</dbReference>
<dbReference type="EMBL" id="CH471071">
    <property type="protein sequence ID" value="EAW58267.1"/>
    <property type="molecule type" value="Genomic_DNA"/>
</dbReference>
<dbReference type="EMBL" id="CH471071">
    <property type="protein sequence ID" value="EAW58268.1"/>
    <property type="molecule type" value="Genomic_DNA"/>
</dbReference>
<dbReference type="EMBL" id="CH471071">
    <property type="protein sequence ID" value="EAW58269.1"/>
    <property type="molecule type" value="Genomic_DNA"/>
</dbReference>
<dbReference type="EMBL" id="BC012175">
    <property type="protein sequence ID" value="AAH12175.1"/>
    <property type="molecule type" value="mRNA"/>
</dbReference>
<dbReference type="EMBL" id="BC057774">
    <property type="protein sequence ID" value="AAH57774.1"/>
    <property type="molecule type" value="mRNA"/>
</dbReference>
<dbReference type="CCDS" id="CCDS43804.1">
    <molecule id="Q6PF06-1"/>
</dbReference>
<dbReference type="CCDS" id="CCDS69598.1">
    <molecule id="Q6PF06-5"/>
</dbReference>
<dbReference type="CCDS" id="CCDS69600.1">
    <molecule id="Q6PF06-4"/>
</dbReference>
<dbReference type="CCDS" id="CCDS69601.1">
    <molecule id="Q6PF06-2"/>
</dbReference>
<dbReference type="RefSeq" id="NP_001273879.1">
    <molecule id="Q6PF06-5"/>
    <property type="nucleotide sequence ID" value="NM_001286950.2"/>
</dbReference>
<dbReference type="RefSeq" id="NP_001273880.1">
    <molecule id="Q6PF06-2"/>
    <property type="nucleotide sequence ID" value="NM_001286951.2"/>
</dbReference>
<dbReference type="RefSeq" id="NP_001273881.1">
    <molecule id="Q6PF06-4"/>
    <property type="nucleotide sequence ID" value="NM_001286952.2"/>
</dbReference>
<dbReference type="RefSeq" id="NP_001273882.1">
    <property type="nucleotide sequence ID" value="NM_001286953.1"/>
</dbReference>
<dbReference type="RefSeq" id="NP_001273883.1">
    <property type="nucleotide sequence ID" value="NM_001286954.1"/>
</dbReference>
<dbReference type="RefSeq" id="NP_659401.2">
    <molecule id="Q6PF06-1"/>
    <property type="nucleotide sequence ID" value="NM_144964.4"/>
</dbReference>
<dbReference type="SMR" id="Q6PF06"/>
<dbReference type="BioGRID" id="127659">
    <property type="interactions" value="42"/>
</dbReference>
<dbReference type="ComplexPortal" id="CPX-6124">
    <property type="entry name" value="TIM22 mitochondrial inner membrane twin-pore carrier translocase complex"/>
</dbReference>
<dbReference type="FunCoup" id="Q6PF06">
    <property type="interactions" value="2018"/>
</dbReference>
<dbReference type="IntAct" id="Q6PF06">
    <property type="interactions" value="36"/>
</dbReference>
<dbReference type="STRING" id="9606.ENSP00000297994"/>
<dbReference type="GlyGen" id="Q6PF06">
    <property type="glycosylation" value="1 site, 1 O-linked glycan (1 site)"/>
</dbReference>
<dbReference type="iPTMnet" id="Q6PF06"/>
<dbReference type="PhosphoSitePlus" id="Q6PF06"/>
<dbReference type="BioMuta" id="TRMT10B"/>
<dbReference type="DMDM" id="74749176"/>
<dbReference type="jPOST" id="Q6PF06"/>
<dbReference type="MassIVE" id="Q6PF06"/>
<dbReference type="PaxDb" id="9606-ENSP00000297994"/>
<dbReference type="PeptideAtlas" id="Q6PF06"/>
<dbReference type="ProteomicsDB" id="6511"/>
<dbReference type="ProteomicsDB" id="67098">
    <molecule id="Q6PF06-1"/>
</dbReference>
<dbReference type="ProteomicsDB" id="67099">
    <molecule id="Q6PF06-2"/>
</dbReference>
<dbReference type="ProteomicsDB" id="67100">
    <molecule id="Q6PF06-3"/>
</dbReference>
<dbReference type="Antibodypedia" id="5730">
    <property type="antibodies" value="106 antibodies from 17 providers"/>
</dbReference>
<dbReference type="DNASU" id="158234"/>
<dbReference type="Ensembl" id="ENST00000297994.4">
    <molecule id="Q6PF06-1"/>
    <property type="protein sequence ID" value="ENSP00000297994.3"/>
    <property type="gene ID" value="ENSG00000165275.10"/>
</dbReference>
<dbReference type="Ensembl" id="ENST00000377753.6">
    <molecule id="Q6PF06-4"/>
    <property type="protein sequence ID" value="ENSP00000366982.2"/>
    <property type="gene ID" value="ENSG00000165275.10"/>
</dbReference>
<dbReference type="Ensembl" id="ENST00000377754.6">
    <molecule id="Q6PF06-2"/>
    <property type="protein sequence ID" value="ENSP00000366983.2"/>
    <property type="gene ID" value="ENSG00000165275.10"/>
</dbReference>
<dbReference type="Ensembl" id="ENST00000488673.6">
    <molecule id="Q6PF06-3"/>
    <property type="protein sequence ID" value="ENSP00000437395.1"/>
    <property type="gene ID" value="ENSG00000165275.10"/>
</dbReference>
<dbReference type="Ensembl" id="ENST00000537911.5">
    <molecule id="Q6PF06-5"/>
    <property type="protein sequence ID" value="ENSP00000444997.1"/>
    <property type="gene ID" value="ENSG00000165275.10"/>
</dbReference>
<dbReference type="GeneID" id="158234"/>
<dbReference type="KEGG" id="hsa:158234"/>
<dbReference type="MANE-Select" id="ENST00000297994.4">
    <property type="protein sequence ID" value="ENSP00000297994.3"/>
    <property type="RefSeq nucleotide sequence ID" value="NM_144964.4"/>
    <property type="RefSeq protein sequence ID" value="NP_659401.2"/>
</dbReference>
<dbReference type="UCSC" id="uc004aai.5">
    <molecule id="Q6PF06-1"/>
    <property type="organism name" value="human"/>
</dbReference>
<dbReference type="AGR" id="HGNC:26454"/>
<dbReference type="CTD" id="158234"/>
<dbReference type="GeneCards" id="TRMT10B"/>
<dbReference type="HGNC" id="HGNC:26454">
    <property type="gene designation" value="TRMT10B"/>
</dbReference>
<dbReference type="HPA" id="ENSG00000165275">
    <property type="expression patterns" value="Low tissue specificity"/>
</dbReference>
<dbReference type="MIM" id="620957">
    <property type="type" value="gene"/>
</dbReference>
<dbReference type="neXtProt" id="NX_Q6PF06"/>
<dbReference type="OpenTargets" id="ENSG00000165275"/>
<dbReference type="PharmGKB" id="PA134938884"/>
<dbReference type="VEuPathDB" id="HostDB:ENSG00000165275"/>
<dbReference type="eggNOG" id="KOG2967">
    <property type="taxonomic scope" value="Eukaryota"/>
</dbReference>
<dbReference type="GeneTree" id="ENSGT00530000063169"/>
<dbReference type="HOGENOM" id="CLU_034384_8_0_1"/>
<dbReference type="InParanoid" id="Q6PF06"/>
<dbReference type="OMA" id="ALQAWFP"/>
<dbReference type="OrthoDB" id="278300at2759"/>
<dbReference type="PAN-GO" id="Q6PF06">
    <property type="GO annotations" value="5 GO annotations based on evolutionary models"/>
</dbReference>
<dbReference type="PhylomeDB" id="Q6PF06"/>
<dbReference type="TreeFam" id="TF330972"/>
<dbReference type="BRENDA" id="2.1.1.218">
    <property type="organism ID" value="2681"/>
</dbReference>
<dbReference type="PathwayCommons" id="Q6PF06"/>
<dbReference type="SignaLink" id="Q6PF06"/>
<dbReference type="SIGNOR" id="Q6PF06"/>
<dbReference type="BioGRID-ORCS" id="158234">
    <property type="hits" value="9 hits in 1153 CRISPR screens"/>
</dbReference>
<dbReference type="ChiTaRS" id="TRMT10B">
    <property type="organism name" value="human"/>
</dbReference>
<dbReference type="GenomeRNAi" id="158234"/>
<dbReference type="Pharos" id="Q6PF06">
    <property type="development level" value="Tdark"/>
</dbReference>
<dbReference type="PRO" id="PR:Q6PF06"/>
<dbReference type="Proteomes" id="UP000005640">
    <property type="component" value="Chromosome 9"/>
</dbReference>
<dbReference type="RNAct" id="Q6PF06">
    <property type="molecule type" value="protein"/>
</dbReference>
<dbReference type="Bgee" id="ENSG00000165275">
    <property type="expression patterns" value="Expressed in right uterine tube and 103 other cell types or tissues"/>
</dbReference>
<dbReference type="ExpressionAtlas" id="Q6PF06">
    <property type="expression patterns" value="baseline and differential"/>
</dbReference>
<dbReference type="GO" id="GO:0005829">
    <property type="term" value="C:cytosol"/>
    <property type="evidence" value="ECO:0000314"/>
    <property type="project" value="CAFA"/>
</dbReference>
<dbReference type="GO" id="GO:0005743">
    <property type="term" value="C:mitochondrial inner membrane"/>
    <property type="evidence" value="ECO:0000314"/>
    <property type="project" value="ComplexPortal"/>
</dbReference>
<dbReference type="GO" id="GO:0005654">
    <property type="term" value="C:nucleoplasm"/>
    <property type="evidence" value="ECO:0000318"/>
    <property type="project" value="GO_Central"/>
</dbReference>
<dbReference type="GO" id="GO:0005634">
    <property type="term" value="C:nucleus"/>
    <property type="evidence" value="ECO:0000318"/>
    <property type="project" value="GO_Central"/>
</dbReference>
<dbReference type="GO" id="GO:0042721">
    <property type="term" value="C:TIM22 mitochondrial import inner membrane insertion complex"/>
    <property type="evidence" value="ECO:0000353"/>
    <property type="project" value="ComplexPortal"/>
</dbReference>
<dbReference type="GO" id="GO:0052905">
    <property type="term" value="F:tRNA (guanosine(9)-N1)-methyltransferase activity"/>
    <property type="evidence" value="ECO:0000314"/>
    <property type="project" value="GO_Central"/>
</dbReference>
<dbReference type="GO" id="GO:0000049">
    <property type="term" value="F:tRNA binding"/>
    <property type="evidence" value="ECO:0000318"/>
    <property type="project" value="GO_Central"/>
</dbReference>
<dbReference type="GO" id="GO:0045039">
    <property type="term" value="P:protein insertion into mitochondrial inner membrane"/>
    <property type="evidence" value="ECO:0000314"/>
    <property type="project" value="ComplexPortal"/>
</dbReference>
<dbReference type="GO" id="GO:0002939">
    <property type="term" value="P:tRNA N1-guanine methylation"/>
    <property type="evidence" value="ECO:0000318"/>
    <property type="project" value="GO_Central"/>
</dbReference>
<dbReference type="CDD" id="cd18100">
    <property type="entry name" value="Trm10euk_B"/>
    <property type="match status" value="1"/>
</dbReference>
<dbReference type="FunFam" id="3.40.1280.30:FF:000002">
    <property type="entry name" value="tRNA methyltransferase 10 homolog B"/>
    <property type="match status" value="1"/>
</dbReference>
<dbReference type="Gene3D" id="3.40.1280.30">
    <property type="match status" value="1"/>
</dbReference>
<dbReference type="InterPro" id="IPR028564">
    <property type="entry name" value="MT_TRM10-typ"/>
</dbReference>
<dbReference type="InterPro" id="IPR038459">
    <property type="entry name" value="MT_TRM10-typ_sf"/>
</dbReference>
<dbReference type="InterPro" id="IPR047911">
    <property type="entry name" value="Trm10_B_MTase_dom"/>
</dbReference>
<dbReference type="InterPro" id="IPR007356">
    <property type="entry name" value="tRNA_m1G_MeTrfase_euk"/>
</dbReference>
<dbReference type="InterPro" id="IPR016009">
    <property type="entry name" value="tRNA_MeTrfase_TRMD/TRM10"/>
</dbReference>
<dbReference type="PANTHER" id="PTHR13563">
    <property type="entry name" value="TRNA (GUANINE-9-) METHYLTRANSFERASE"/>
    <property type="match status" value="1"/>
</dbReference>
<dbReference type="PANTHER" id="PTHR13563:SF19">
    <property type="entry name" value="TRNA METHYLTRANSFERASE 10 HOMOLOG B"/>
    <property type="match status" value="1"/>
</dbReference>
<dbReference type="Pfam" id="PF01746">
    <property type="entry name" value="tRNA_m1G_MT"/>
    <property type="match status" value="1"/>
</dbReference>
<dbReference type="PROSITE" id="PS51675">
    <property type="entry name" value="SAM_MT_TRM10"/>
    <property type="match status" value="1"/>
</dbReference>
<evidence type="ECO:0000255" key="1"/>
<evidence type="ECO:0000255" key="2">
    <source>
        <dbReference type="PROSITE-ProRule" id="PRU01012"/>
    </source>
</evidence>
<evidence type="ECO:0000256" key="3">
    <source>
        <dbReference type="SAM" id="MobiDB-lite"/>
    </source>
</evidence>
<evidence type="ECO:0000269" key="4">
    <source>
    </source>
</evidence>
<evidence type="ECO:0000303" key="5">
    <source>
    </source>
</evidence>
<evidence type="ECO:0000303" key="6">
    <source>
    </source>
</evidence>
<evidence type="ECO:0000305" key="7"/>
<gene>
    <name type="primary">TRMT10B</name>
    <name type="synonym">RG9MTD3</name>
</gene>